<protein>
    <recommendedName>
        <fullName evidence="2">S-ribosylhomocysteine lyase</fullName>
        <ecNumber evidence="2">4.4.1.21</ecNumber>
    </recommendedName>
    <alternativeName>
        <fullName evidence="2">AI-2 synthesis protein</fullName>
    </alternativeName>
    <alternativeName>
        <fullName evidence="2">Autoinducer-2 production protein LuxS</fullName>
    </alternativeName>
</protein>
<accession>Q8Z4D7</accession>
<dbReference type="EC" id="4.4.1.21" evidence="2"/>
<dbReference type="EMBL" id="AL513382">
    <property type="protein sequence ID" value="CAD05928.1"/>
    <property type="molecule type" value="Genomic_DNA"/>
</dbReference>
<dbReference type="EMBL" id="AE014613">
    <property type="protein sequence ID" value="AAO70280.1"/>
    <property type="molecule type" value="Genomic_DNA"/>
</dbReference>
<dbReference type="RefSeq" id="NP_457215.1">
    <property type="nucleotide sequence ID" value="NC_003198.1"/>
</dbReference>
<dbReference type="PDB" id="5E68">
    <property type="method" value="X-ray"/>
    <property type="resolution" value="1.58 A"/>
    <property type="chains" value="A/B=1-171"/>
</dbReference>
<dbReference type="PDB" id="5V2W">
    <property type="method" value="X-ray"/>
    <property type="resolution" value="2.30 A"/>
    <property type="chains" value="A/B=1-171"/>
</dbReference>
<dbReference type="PDBsum" id="5E68"/>
<dbReference type="PDBsum" id="5V2W"/>
<dbReference type="SMR" id="Q8Z4D7"/>
<dbReference type="STRING" id="220341.gene:17586833"/>
<dbReference type="KEGG" id="stt:t2714"/>
<dbReference type="KEGG" id="sty:STY2943"/>
<dbReference type="PATRIC" id="fig|220341.7.peg.2996"/>
<dbReference type="eggNOG" id="COG1854">
    <property type="taxonomic scope" value="Bacteria"/>
</dbReference>
<dbReference type="HOGENOM" id="CLU_107531_2_0_6"/>
<dbReference type="OMA" id="DVSPMGC"/>
<dbReference type="Proteomes" id="UP000000541">
    <property type="component" value="Chromosome"/>
</dbReference>
<dbReference type="Proteomes" id="UP000002670">
    <property type="component" value="Chromosome"/>
</dbReference>
<dbReference type="GO" id="GO:0005506">
    <property type="term" value="F:iron ion binding"/>
    <property type="evidence" value="ECO:0007669"/>
    <property type="project" value="InterPro"/>
</dbReference>
<dbReference type="GO" id="GO:0043768">
    <property type="term" value="F:S-ribosylhomocysteine lyase activity"/>
    <property type="evidence" value="ECO:0007669"/>
    <property type="project" value="UniProtKB-UniRule"/>
</dbReference>
<dbReference type="GO" id="GO:0009372">
    <property type="term" value="P:quorum sensing"/>
    <property type="evidence" value="ECO:0007669"/>
    <property type="project" value="UniProtKB-UniRule"/>
</dbReference>
<dbReference type="FunFam" id="3.30.1360.80:FF:000001">
    <property type="entry name" value="S-ribosylhomocysteine lyase"/>
    <property type="match status" value="1"/>
</dbReference>
<dbReference type="Gene3D" id="3.30.1360.80">
    <property type="entry name" value="S-ribosylhomocysteinase (LuxS)"/>
    <property type="match status" value="1"/>
</dbReference>
<dbReference type="HAMAP" id="MF_00091">
    <property type="entry name" value="LuxS"/>
    <property type="match status" value="1"/>
</dbReference>
<dbReference type="InterPro" id="IPR037005">
    <property type="entry name" value="LuxS_sf"/>
</dbReference>
<dbReference type="InterPro" id="IPR011249">
    <property type="entry name" value="Metalloenz_LuxS/M16"/>
</dbReference>
<dbReference type="InterPro" id="IPR003815">
    <property type="entry name" value="S-ribosylhomocysteinase"/>
</dbReference>
<dbReference type="NCBIfam" id="NF002602">
    <property type="entry name" value="PRK02260.1-2"/>
    <property type="match status" value="1"/>
</dbReference>
<dbReference type="PANTHER" id="PTHR35799">
    <property type="entry name" value="S-RIBOSYLHOMOCYSTEINE LYASE"/>
    <property type="match status" value="1"/>
</dbReference>
<dbReference type="PANTHER" id="PTHR35799:SF1">
    <property type="entry name" value="S-RIBOSYLHOMOCYSTEINE LYASE"/>
    <property type="match status" value="1"/>
</dbReference>
<dbReference type="Pfam" id="PF02664">
    <property type="entry name" value="LuxS"/>
    <property type="match status" value="1"/>
</dbReference>
<dbReference type="PIRSF" id="PIRSF006160">
    <property type="entry name" value="AI2"/>
    <property type="match status" value="1"/>
</dbReference>
<dbReference type="PRINTS" id="PR01487">
    <property type="entry name" value="LUXSPROTEIN"/>
</dbReference>
<dbReference type="SUPFAM" id="SSF63411">
    <property type="entry name" value="LuxS/MPP-like metallohydrolase"/>
    <property type="match status" value="1"/>
</dbReference>
<name>LUXS_SALTI</name>
<proteinExistence type="evidence at protein level"/>
<sequence>MPLLDSFAVDHTRMQAPAVRGAKTMNTPHGDAITVFDLRFCIPNKEVMPEKGIHTLEHLFAGFMRDHLNGNGVEIIDISPMGCRTGFYMSLIGTPDEQRVADAWKAAMADVLKVQDQNQIPELNVYQCGTYQMHSLSEAQDIARHILERDVRVNSNKELALPKEKLQELHI</sequence>
<feature type="initiator methionine" description="Removed" evidence="1">
    <location>
        <position position="1"/>
    </location>
</feature>
<feature type="chain" id="PRO_0000172248" description="S-ribosylhomocysteine lyase">
    <location>
        <begin position="2"/>
        <end position="171"/>
    </location>
</feature>
<feature type="binding site" evidence="2">
    <location>
        <position position="54"/>
    </location>
    <ligand>
        <name>Fe cation</name>
        <dbReference type="ChEBI" id="CHEBI:24875"/>
    </ligand>
</feature>
<feature type="binding site" evidence="2">
    <location>
        <position position="58"/>
    </location>
    <ligand>
        <name>Fe cation</name>
        <dbReference type="ChEBI" id="CHEBI:24875"/>
    </ligand>
</feature>
<feature type="binding site" evidence="2">
    <location>
        <position position="128"/>
    </location>
    <ligand>
        <name>Fe cation</name>
        <dbReference type="ChEBI" id="CHEBI:24875"/>
    </ligand>
</feature>
<feature type="sequence conflict" description="In Ref. 2; AAO70280." evidence="3" ref="2">
    <original>G</original>
    <variation>V</variation>
    <location>
        <position position="21"/>
    </location>
</feature>
<feature type="strand" evidence="4">
    <location>
        <begin position="16"/>
        <end position="26"/>
    </location>
</feature>
<feature type="strand" evidence="4">
    <location>
        <begin position="32"/>
        <end position="39"/>
    </location>
</feature>
<feature type="turn" evidence="4">
    <location>
        <begin position="43"/>
        <end position="45"/>
    </location>
</feature>
<feature type="helix" evidence="4">
    <location>
        <begin position="50"/>
        <end position="68"/>
    </location>
</feature>
<feature type="strand" evidence="4">
    <location>
        <begin position="70"/>
        <end position="72"/>
    </location>
</feature>
<feature type="strand" evidence="4">
    <location>
        <begin position="74"/>
        <end position="80"/>
    </location>
</feature>
<feature type="strand" evidence="4">
    <location>
        <begin position="84"/>
        <end position="93"/>
    </location>
</feature>
<feature type="helix" evidence="4">
    <location>
        <begin position="97"/>
        <end position="112"/>
    </location>
</feature>
<feature type="helix" evidence="4">
    <location>
        <begin position="117"/>
        <end position="119"/>
    </location>
</feature>
<feature type="turn" evidence="4">
    <location>
        <begin position="125"/>
        <end position="127"/>
    </location>
</feature>
<feature type="turn" evidence="4">
    <location>
        <begin position="129"/>
        <end position="132"/>
    </location>
</feature>
<feature type="helix" evidence="4">
    <location>
        <begin position="136"/>
        <end position="149"/>
    </location>
</feature>
<feature type="helix" evidence="4">
    <location>
        <begin position="156"/>
        <end position="159"/>
    </location>
</feature>
<feature type="helix" evidence="4">
    <location>
        <begin position="163"/>
        <end position="168"/>
    </location>
</feature>
<organism>
    <name type="scientific">Salmonella typhi</name>
    <dbReference type="NCBI Taxonomy" id="90370"/>
    <lineage>
        <taxon>Bacteria</taxon>
        <taxon>Pseudomonadati</taxon>
        <taxon>Pseudomonadota</taxon>
        <taxon>Gammaproteobacteria</taxon>
        <taxon>Enterobacterales</taxon>
        <taxon>Enterobacteriaceae</taxon>
        <taxon>Salmonella</taxon>
    </lineage>
</organism>
<comment type="function">
    <text evidence="2">Involved in the synthesis of autoinducer 2 (AI-2) which is secreted by bacteria and is used to communicate both the cell density and the metabolic potential of the environment. The regulation of gene expression in response to changes in cell density is called quorum sensing. Catalyzes the transformation of S-ribosylhomocysteine (RHC) to homocysteine (HC) and 4,5-dihydroxy-2,3-pentadione (DPD).</text>
</comment>
<comment type="catalytic activity">
    <reaction evidence="2">
        <text>S-(5-deoxy-D-ribos-5-yl)-L-homocysteine = (S)-4,5-dihydroxypentane-2,3-dione + L-homocysteine</text>
        <dbReference type="Rhea" id="RHEA:17753"/>
        <dbReference type="ChEBI" id="CHEBI:29484"/>
        <dbReference type="ChEBI" id="CHEBI:58195"/>
        <dbReference type="ChEBI" id="CHEBI:58199"/>
        <dbReference type="EC" id="4.4.1.21"/>
    </reaction>
</comment>
<comment type="cofactor">
    <cofactor evidence="2">
        <name>Fe cation</name>
        <dbReference type="ChEBI" id="CHEBI:24875"/>
    </cofactor>
    <text evidence="2">Binds 1 Fe cation per subunit.</text>
</comment>
<comment type="subunit">
    <text evidence="2">Homodimer.</text>
</comment>
<comment type="similarity">
    <text evidence="2">Belongs to the LuxS family.</text>
</comment>
<evidence type="ECO:0000250" key="1"/>
<evidence type="ECO:0000255" key="2">
    <source>
        <dbReference type="HAMAP-Rule" id="MF_00091"/>
    </source>
</evidence>
<evidence type="ECO:0000305" key="3"/>
<evidence type="ECO:0007829" key="4">
    <source>
        <dbReference type="PDB" id="5E68"/>
    </source>
</evidence>
<gene>
    <name evidence="2" type="primary">luxS</name>
    <name type="ordered locus">STY2943</name>
    <name type="ordered locus">t2714</name>
</gene>
<keyword id="KW-0002">3D-structure</keyword>
<keyword id="KW-0071">Autoinducer synthesis</keyword>
<keyword id="KW-0408">Iron</keyword>
<keyword id="KW-0456">Lyase</keyword>
<keyword id="KW-0479">Metal-binding</keyword>
<keyword id="KW-0673">Quorum sensing</keyword>
<reference key="1">
    <citation type="journal article" date="2001" name="Nature">
        <title>Complete genome sequence of a multiple drug resistant Salmonella enterica serovar Typhi CT18.</title>
        <authorList>
            <person name="Parkhill J."/>
            <person name="Dougan G."/>
            <person name="James K.D."/>
            <person name="Thomson N.R."/>
            <person name="Pickard D."/>
            <person name="Wain J."/>
            <person name="Churcher C.M."/>
            <person name="Mungall K.L."/>
            <person name="Bentley S.D."/>
            <person name="Holden M.T.G."/>
            <person name="Sebaihia M."/>
            <person name="Baker S."/>
            <person name="Basham D."/>
            <person name="Brooks K."/>
            <person name="Chillingworth T."/>
            <person name="Connerton P."/>
            <person name="Cronin A."/>
            <person name="Davis P."/>
            <person name="Davies R.M."/>
            <person name="Dowd L."/>
            <person name="White N."/>
            <person name="Farrar J."/>
            <person name="Feltwell T."/>
            <person name="Hamlin N."/>
            <person name="Haque A."/>
            <person name="Hien T.T."/>
            <person name="Holroyd S."/>
            <person name="Jagels K."/>
            <person name="Krogh A."/>
            <person name="Larsen T.S."/>
            <person name="Leather S."/>
            <person name="Moule S."/>
            <person name="O'Gaora P."/>
            <person name="Parry C."/>
            <person name="Quail M.A."/>
            <person name="Rutherford K.M."/>
            <person name="Simmonds M."/>
            <person name="Skelton J."/>
            <person name="Stevens K."/>
            <person name="Whitehead S."/>
            <person name="Barrell B.G."/>
        </authorList>
    </citation>
    <scope>NUCLEOTIDE SEQUENCE [LARGE SCALE GENOMIC DNA]</scope>
    <source>
        <strain>CT18</strain>
    </source>
</reference>
<reference key="2">
    <citation type="journal article" date="2003" name="J. Bacteriol.">
        <title>Comparative genomics of Salmonella enterica serovar Typhi strains Ty2 and CT18.</title>
        <authorList>
            <person name="Deng W."/>
            <person name="Liou S.-R."/>
            <person name="Plunkett G. III"/>
            <person name="Mayhew G.F."/>
            <person name="Rose D.J."/>
            <person name="Burland V."/>
            <person name="Kodoyianni V."/>
            <person name="Schwartz D.C."/>
            <person name="Blattner F.R."/>
        </authorList>
    </citation>
    <scope>NUCLEOTIDE SEQUENCE [LARGE SCALE GENOMIC DNA]</scope>
    <source>
        <strain>ATCC 700931 / Ty2</strain>
    </source>
</reference>